<protein>
    <recommendedName>
        <fullName evidence="1">N-(5'-phosphoribosyl)anthranilate isomerase</fullName>
        <shortName evidence="1">PRAI</shortName>
        <ecNumber evidence="1">5.3.1.24</ecNumber>
    </recommendedName>
</protein>
<comment type="catalytic activity">
    <reaction evidence="1">
        <text>N-(5-phospho-beta-D-ribosyl)anthranilate = 1-(2-carboxyphenylamino)-1-deoxy-D-ribulose 5-phosphate</text>
        <dbReference type="Rhea" id="RHEA:21540"/>
        <dbReference type="ChEBI" id="CHEBI:18277"/>
        <dbReference type="ChEBI" id="CHEBI:58613"/>
        <dbReference type="EC" id="5.3.1.24"/>
    </reaction>
</comment>
<comment type="pathway">
    <text evidence="1">Amino-acid biosynthesis; L-tryptophan biosynthesis; L-tryptophan from chorismate: step 3/5.</text>
</comment>
<comment type="similarity">
    <text evidence="1">Belongs to the TrpF family.</text>
</comment>
<accession>Q2FH65</accession>
<proteinExistence type="inferred from homology"/>
<feature type="chain" id="PRO_1000197122" description="N-(5'-phosphoribosyl)anthranilate isomerase">
    <location>
        <begin position="1"/>
        <end position="210"/>
    </location>
</feature>
<dbReference type="EC" id="5.3.1.24" evidence="1"/>
<dbReference type="EMBL" id="CP000255">
    <property type="protein sequence ID" value="ABD22806.1"/>
    <property type="molecule type" value="Genomic_DNA"/>
</dbReference>
<dbReference type="RefSeq" id="WP_000768192.1">
    <property type="nucleotide sequence ID" value="NZ_CP027476.1"/>
</dbReference>
<dbReference type="SMR" id="Q2FH65"/>
<dbReference type="KEGG" id="saa:SAUSA300_1266"/>
<dbReference type="HOGENOM" id="CLU_076364_1_1_9"/>
<dbReference type="OMA" id="FHGDESP"/>
<dbReference type="UniPathway" id="UPA00035">
    <property type="reaction ID" value="UER00042"/>
</dbReference>
<dbReference type="Proteomes" id="UP000001939">
    <property type="component" value="Chromosome"/>
</dbReference>
<dbReference type="GO" id="GO:0004640">
    <property type="term" value="F:phosphoribosylanthranilate isomerase activity"/>
    <property type="evidence" value="ECO:0007669"/>
    <property type="project" value="UniProtKB-UniRule"/>
</dbReference>
<dbReference type="GO" id="GO:0000162">
    <property type="term" value="P:L-tryptophan biosynthetic process"/>
    <property type="evidence" value="ECO:0007669"/>
    <property type="project" value="UniProtKB-UniRule"/>
</dbReference>
<dbReference type="CDD" id="cd00405">
    <property type="entry name" value="PRAI"/>
    <property type="match status" value="1"/>
</dbReference>
<dbReference type="FunFam" id="3.20.20.70:FF:000277">
    <property type="entry name" value="Phosphoribosylanthranilate isomerase"/>
    <property type="match status" value="1"/>
</dbReference>
<dbReference type="Gene3D" id="3.20.20.70">
    <property type="entry name" value="Aldolase class I"/>
    <property type="match status" value="1"/>
</dbReference>
<dbReference type="HAMAP" id="MF_00135">
    <property type="entry name" value="PRAI"/>
    <property type="match status" value="1"/>
</dbReference>
<dbReference type="InterPro" id="IPR013785">
    <property type="entry name" value="Aldolase_TIM"/>
</dbReference>
<dbReference type="InterPro" id="IPR001240">
    <property type="entry name" value="PRAI_dom"/>
</dbReference>
<dbReference type="InterPro" id="IPR011060">
    <property type="entry name" value="RibuloseP-bd_barrel"/>
</dbReference>
<dbReference type="InterPro" id="IPR044643">
    <property type="entry name" value="TrpF_fam"/>
</dbReference>
<dbReference type="NCBIfam" id="NF010563">
    <property type="entry name" value="PRK13958.1"/>
    <property type="match status" value="1"/>
</dbReference>
<dbReference type="PANTHER" id="PTHR42894">
    <property type="entry name" value="N-(5'-PHOSPHORIBOSYL)ANTHRANILATE ISOMERASE"/>
    <property type="match status" value="1"/>
</dbReference>
<dbReference type="PANTHER" id="PTHR42894:SF1">
    <property type="entry name" value="N-(5'-PHOSPHORIBOSYL)ANTHRANILATE ISOMERASE"/>
    <property type="match status" value="1"/>
</dbReference>
<dbReference type="Pfam" id="PF00697">
    <property type="entry name" value="PRAI"/>
    <property type="match status" value="1"/>
</dbReference>
<dbReference type="SUPFAM" id="SSF51366">
    <property type="entry name" value="Ribulose-phoshate binding barrel"/>
    <property type="match status" value="1"/>
</dbReference>
<sequence length="210" mass="23389">MKLKFCGFTSIKDVTAASQLPIDAIGFIHYEKSKRHQTITQIKKLASAVPNHIDKVCVMVNPDLTTIEHVLSNTSINTIQLHGTESIDFIQEIKKKYSSIKITKALAADENIIQNINKYKGFVDLFIIDTPSVSYGGTGQTYDWTILKHIKDIPYLIAGGINSENIQTVNQLKLSHQGYDLASGIEVNGRKDIEKMTAIVNIVKGDRDNE</sequence>
<reference key="1">
    <citation type="journal article" date="2006" name="Lancet">
        <title>Complete genome sequence of USA300, an epidemic clone of community-acquired meticillin-resistant Staphylococcus aureus.</title>
        <authorList>
            <person name="Diep B.A."/>
            <person name="Gill S.R."/>
            <person name="Chang R.F."/>
            <person name="Phan T.H."/>
            <person name="Chen J.H."/>
            <person name="Davidson M.G."/>
            <person name="Lin F."/>
            <person name="Lin J."/>
            <person name="Carleton H.A."/>
            <person name="Mongodin E.F."/>
            <person name="Sensabaugh G.F."/>
            <person name="Perdreau-Remington F."/>
        </authorList>
    </citation>
    <scope>NUCLEOTIDE SEQUENCE [LARGE SCALE GENOMIC DNA]</scope>
    <source>
        <strain>USA300</strain>
    </source>
</reference>
<keyword id="KW-0028">Amino-acid biosynthesis</keyword>
<keyword id="KW-0057">Aromatic amino acid biosynthesis</keyword>
<keyword id="KW-0413">Isomerase</keyword>
<keyword id="KW-0822">Tryptophan biosynthesis</keyword>
<organism>
    <name type="scientific">Staphylococcus aureus (strain USA300)</name>
    <dbReference type="NCBI Taxonomy" id="367830"/>
    <lineage>
        <taxon>Bacteria</taxon>
        <taxon>Bacillati</taxon>
        <taxon>Bacillota</taxon>
        <taxon>Bacilli</taxon>
        <taxon>Bacillales</taxon>
        <taxon>Staphylococcaceae</taxon>
        <taxon>Staphylococcus</taxon>
    </lineage>
</organism>
<evidence type="ECO:0000255" key="1">
    <source>
        <dbReference type="HAMAP-Rule" id="MF_00135"/>
    </source>
</evidence>
<gene>
    <name evidence="1" type="primary">trpF</name>
    <name type="ordered locus">SAUSA300_1266</name>
</gene>
<name>TRPF_STAA3</name>